<comment type="function">
    <text evidence="2 3 9 11 12 13">Serine/threonine-protein kinase involved in various processes such as cell proliferation, differentiation, migration, transformation and programmed cell death (PubMed:16618812, PubMed:9516415). Extracellular stimuli such as pro-inflammatory cytokines or physical stress stimulate the stress-activated protein kinase/c-Jun N-terminal kinase (SAP/JNK) signaling pathway. In this cascade, two dual specificity kinases MAP2K4/MKK4 and MAP2K7/MKK7 phosphorylate and activate MAPK8/JNK1. In turn, MAPK8/JNK1 phosphorylates a number of transcription factors, primarily components of AP-1 such as JUN, JDP2 and ATF2 and thus regulates AP-1 transcriptional activity. Phosphorylates the replication licensing factor CDT1, inhibiting the interaction between CDT1 and the histone H4 acetylase HBO1 to replication origins. Loss of this interaction abrogates the acetylation required for replication initiation. Promotes stressed cell apoptosis by phosphorylating key regulatory factors including p53/TP53 and Yes-associates protein YAP1. In T-cells, MAPK8 and MAPK9 are required for polarized differentiation of T-helper cells into Th1 cells. Contributes to the survival of erythroid cells by phosphorylating the antagonist of cell death BAD upon EPO stimulation. Mediates starvation-induced BCL2 phosphorylation, BCL2 dissociation from BECN1, and thus activation of autophagy. Phosphorylates STMN2 and hence regulates microtubule dynamics, controlling neurite elongation in cortical neurons. In the developing brain, through its cytoplasmic activity on STMN2, negatively regulates the rate of exit from multipolar stage and of radial migration from the ventricular zone (PubMed:21297631). Phosphorylates several other substrates including heat shock factor protein 4 (HSF4), the deacetylase SIRT1, ELK1, or the E3 ligase ITCH. Phosphorylates the CLOCK-BMAL1 heterodimer and plays a role in the regulation of the circadian clock (By similarity). Phosphorylates the heat shock transcription factor HSF1, suppressing HSF1-induced transcriptional activity (By similarity). Phosphorylates POU5F1, which results in the inhibition of POU5F1's transcriptional activity and enhances its proteasomal degradation (By similarity). Phosphorylates JUND and this phosphorylation is inhibited in the presence of MEN1 (By similarity). In neurons, phosphorylates SYT4 which captures neuronal dense core vesicles at synapses (PubMed:29166604). Phosphorylates EIF4ENIF1/4-ET in response to oxidative stress, promoting P-body assembly (By similarity). Phosphorylates SIRT6 in response to oxidative stress, stimulating its mono-ADP-ribosyltransferase activity (By similarity). Phosphorylates NLRP3, promoting assembly of the NLRP3 inflammasome (By similarity). Phosphorylates ALKBH5 in response to reactive oxygen species (ROS), promoting ALKBH5 sumoylation and inactivation (By similarity).</text>
</comment>
<comment type="catalytic activity">
    <reaction evidence="7 9 11 13">
        <text>L-seryl-[protein] + ATP = O-phospho-L-seryl-[protein] + ADP + H(+)</text>
        <dbReference type="Rhea" id="RHEA:17989"/>
        <dbReference type="Rhea" id="RHEA-COMP:9863"/>
        <dbReference type="Rhea" id="RHEA-COMP:11604"/>
        <dbReference type="ChEBI" id="CHEBI:15378"/>
        <dbReference type="ChEBI" id="CHEBI:29999"/>
        <dbReference type="ChEBI" id="CHEBI:30616"/>
        <dbReference type="ChEBI" id="CHEBI:83421"/>
        <dbReference type="ChEBI" id="CHEBI:456216"/>
        <dbReference type="EC" id="2.7.11.24"/>
    </reaction>
</comment>
<comment type="catalytic activity">
    <reaction evidence="7 9 11 13">
        <text>L-threonyl-[protein] + ATP = O-phospho-L-threonyl-[protein] + ADP + H(+)</text>
        <dbReference type="Rhea" id="RHEA:46608"/>
        <dbReference type="Rhea" id="RHEA-COMP:11060"/>
        <dbReference type="Rhea" id="RHEA-COMP:11605"/>
        <dbReference type="ChEBI" id="CHEBI:15378"/>
        <dbReference type="ChEBI" id="CHEBI:30013"/>
        <dbReference type="ChEBI" id="CHEBI:30616"/>
        <dbReference type="ChEBI" id="CHEBI:61977"/>
        <dbReference type="ChEBI" id="CHEBI:456216"/>
        <dbReference type="EC" id="2.7.11.24"/>
    </reaction>
</comment>
<comment type="cofactor">
    <cofactor evidence="13">
        <name>Mg(2+)</name>
        <dbReference type="ChEBI" id="CHEBI:18420"/>
    </cofactor>
</comment>
<comment type="activity regulation">
    <text evidence="2">Activated by threonine and tyrosine phosphorylation by either of two dual specificity kinases, MAP2K4 and MAP2K7. MAP2K4 shows a strong preference for Tyr-185 while MAP2K7 phosphorylates Tyr-183 preferentially. Inhibited by dual specificity phosphatases, such as DUSP1. Inhibited by SERPINB3 (By similarity). Inhibited by IFN-gamma-induced S-nitrosylation.</text>
</comment>
<comment type="subunit">
    <text evidence="2 3 8 9 10">Forms a complex with MAPK8IP1 and ARHGEF28 (PubMed:14499478). Found in a complex with SH3RF1, RAC1, MAP3K11/MLK3, MAP2K7/MKK7 and MAPK8IP1/JIP1. Found in a complex with SH3RF1, RAC2, MAP3K7/TAK1, MAP2K7/MKK7, MAPK8IP1/JIP1 and MAPK9/JNK2 (By similarity). Binds to at least four scaffolding proteins, MAPK8IP1/JIP-1, MAPK8IP2/JIP-2, MAPK8IP3/JIP-3/JSAP1 and SPAG9/MAPK8IP4/JIP-4. These proteins also bind other components of the JNK signaling pathway. Interacts with TP53, WWOX. Interacts with JAMP. Interacts with NFATC4. Interacts (phosphorylated form) with NFE2; the interaction phosphorylates NFE2 in undifferentiated cells. Interacts with MECOM; regulates JNK signaling. Interacts with PIN1; this interaction mediates MAPK8 conformational changes leading to the binding of MAPK8 to its substrates (By similarity). Interacts with HSF1 (via D domain and preferentially with hyperphosphorylated form); this interaction occurs under both normal growth conditions and immediately upon heat shock (By similarity). Interacts with STMN2, STMN3 and STMN4 (PubMed:16618812). Interacts with GRIPAP1 (PubMed:17761173). Interacts with POU5F1; phosphorylates POU5F1 at 'Ser-347'. Interacts with HSF4 (By similarity).</text>
</comment>
<comment type="interaction">
    <interactant intactId="EBI-7456505">
        <id>P49185</id>
    </interactant>
    <interactant intactId="EBI-9118256">
        <id>P19491-3</id>
        <label>Gria2</label>
    </interactant>
    <organismsDiffer>false</organismsDiffer>
    <experiments>2</experiments>
</comment>
<comment type="interaction">
    <interactant intactId="EBI-7456505">
        <id>P49185</id>
    </interactant>
    <interactant intactId="EBI-7761834">
        <id>P19493</id>
        <label>Gria4</label>
    </interactant>
    <organismsDiffer>false</organismsDiffer>
    <experiments>2</experiments>
</comment>
<comment type="interaction">
    <interactant intactId="EBI-7456505">
        <id>P49185</id>
    </interactant>
    <interactant intactId="EBI-7709365">
        <id>P17325</id>
        <label>Jun</label>
    </interactant>
    <organismsDiffer>false</organismsDiffer>
    <experiments>2</experiments>
</comment>
<comment type="interaction">
    <interactant intactId="EBI-7456505">
        <id>P49185</id>
    </interactant>
    <interactant intactId="EBI-540118">
        <id>P50232</id>
        <label>Syt4</label>
    </interactant>
    <organismsDiffer>false</organismsDiffer>
    <experiments>5</experiments>
</comment>
<comment type="subcellular location">
    <subcellularLocation>
        <location evidence="9">Cytoplasm</location>
    </subcellularLocation>
    <subcellularLocation>
        <location evidence="3">Nucleus</location>
    </subcellularLocation>
    <subcellularLocation>
        <location evidence="12">Synapse</location>
    </subcellularLocation>
    <text evidence="3 9 12">In the cortical neurons, predominantly cytoplasmic and associated with the Golgi apparatus and endosomal fraction (PubMed:16618812). Increased neuronal activity increases phosphorylated form at synapses (PubMed:29166604). Colocalizes with POU5F1 in the nucleus (By similarity).</text>
</comment>
<comment type="domain">
    <text>The TXY motif contains the threonine and tyrosine residues whose phosphorylation activates the MAP kinases.</text>
</comment>
<comment type="PTM">
    <text evidence="1 12">Dually phosphorylated on Thr-183 and Tyr-185 by MAP2K7 and MAP2K4, which activates the enzyme. Phosphorylated by TAOK2 (By similarity). Phosphorylated form is more concentrated at synapses than none-phosphorylated (PubMed:29166604).</text>
</comment>
<comment type="PTM">
    <text evidence="2 7">Nitrosylated upon IFN-gamma-induced endogenous NO production, which inhibits the enzyme (PubMed:11121042). May be phosphorylated at Thr-183 and Tyr-185 by MAP3K1/MEKK1 (By similarity).</text>
</comment>
<comment type="similarity">
    <text evidence="14">Belongs to the protein kinase superfamily. CMGC Ser/Thr protein kinase family. MAP kinase subfamily.</text>
</comment>
<name>MK08_RAT</name>
<accession>P49185</accession>
<protein>
    <recommendedName>
        <fullName>Mitogen-activated protein kinase 8</fullName>
        <shortName>MAP kinase 8</shortName>
        <shortName>MAPK 8</shortName>
        <ecNumber evidence="7 9 11 13">2.7.11.24</ecNumber>
    </recommendedName>
    <alternativeName>
        <fullName>SAPK gamma</fullName>
    </alternativeName>
    <alternativeName>
        <fullName>Stress-activated protein kinase JNK1</fullName>
    </alternativeName>
    <alternativeName>
        <fullName>c-Jun N-terminal kinase 1</fullName>
    </alternativeName>
    <alternativeName>
        <fullName>p54 gamma</fullName>
    </alternativeName>
</protein>
<proteinExistence type="evidence at protein level"/>
<evidence type="ECO:0000250" key="1"/>
<evidence type="ECO:0000250" key="2">
    <source>
        <dbReference type="UniProtKB" id="P45983"/>
    </source>
</evidence>
<evidence type="ECO:0000250" key="3">
    <source>
        <dbReference type="UniProtKB" id="Q91Y86"/>
    </source>
</evidence>
<evidence type="ECO:0000255" key="4">
    <source>
        <dbReference type="PROSITE-ProRule" id="PRU00159"/>
    </source>
</evidence>
<evidence type="ECO:0000255" key="5">
    <source>
        <dbReference type="PROSITE-ProRule" id="PRU10027"/>
    </source>
</evidence>
<evidence type="ECO:0000256" key="6">
    <source>
        <dbReference type="SAM" id="MobiDB-lite"/>
    </source>
</evidence>
<evidence type="ECO:0000269" key="7">
    <source>
    </source>
</evidence>
<evidence type="ECO:0000269" key="8">
    <source>
    </source>
</evidence>
<evidence type="ECO:0000269" key="9">
    <source>
    </source>
</evidence>
<evidence type="ECO:0000269" key="10">
    <source>
    </source>
</evidence>
<evidence type="ECO:0000269" key="11">
    <source>
    </source>
</evidence>
<evidence type="ECO:0000269" key="12">
    <source>
    </source>
</evidence>
<evidence type="ECO:0000269" key="13">
    <source>
    </source>
</evidence>
<evidence type="ECO:0000305" key="14"/>
<dbReference type="EC" id="2.7.11.24" evidence="7 9 11 13"/>
<dbReference type="EMBL" id="L27129">
    <property type="protein sequence ID" value="AAA42111.1"/>
    <property type="molecule type" value="mRNA"/>
</dbReference>
<dbReference type="PIR" id="S43970">
    <property type="entry name" value="S43970"/>
</dbReference>
<dbReference type="RefSeq" id="NP_446281.2">
    <property type="nucleotide sequence ID" value="NM_053829.2"/>
</dbReference>
<dbReference type="SMR" id="P49185"/>
<dbReference type="FunCoup" id="P49185">
    <property type="interactions" value="4327"/>
</dbReference>
<dbReference type="IntAct" id="P49185">
    <property type="interactions" value="6"/>
</dbReference>
<dbReference type="MINT" id="P49185"/>
<dbReference type="STRING" id="10116.ENSRNOP00000062048"/>
<dbReference type="BindingDB" id="P49185"/>
<dbReference type="ChEMBL" id="CHEMBL5718"/>
<dbReference type="GlyGen" id="P49185">
    <property type="glycosylation" value="1 site, 1 O-linked glycan (1 site)"/>
</dbReference>
<dbReference type="iPTMnet" id="P49185"/>
<dbReference type="PhosphoSitePlus" id="P49185"/>
<dbReference type="jPOST" id="P49185"/>
<dbReference type="PaxDb" id="10116-ENSRNOP00000062048"/>
<dbReference type="GeneID" id="116554"/>
<dbReference type="KEGG" id="rno:116554"/>
<dbReference type="UCSC" id="RGD:621506">
    <property type="organism name" value="rat"/>
</dbReference>
<dbReference type="AGR" id="RGD:621506"/>
<dbReference type="CTD" id="5599"/>
<dbReference type="RGD" id="621506">
    <property type="gene designation" value="Mapk8"/>
</dbReference>
<dbReference type="eggNOG" id="KOG0665">
    <property type="taxonomic scope" value="Eukaryota"/>
</dbReference>
<dbReference type="InParanoid" id="P49185"/>
<dbReference type="OrthoDB" id="11257at9989"/>
<dbReference type="PhylomeDB" id="P49185"/>
<dbReference type="BRENDA" id="2.7.11.24">
    <property type="organism ID" value="5301"/>
</dbReference>
<dbReference type="Reactome" id="R-RNO-111446">
    <property type="pathway name" value="Activation of BIM and translocation to mitochondria"/>
</dbReference>
<dbReference type="Reactome" id="R-RNO-139910">
    <property type="pathway name" value="Activation of BMF and translocation to mitochondria"/>
</dbReference>
<dbReference type="Reactome" id="R-RNO-193648">
    <property type="pathway name" value="NRAGE signals death through JNK"/>
</dbReference>
<dbReference type="Reactome" id="R-RNO-2559580">
    <property type="pathway name" value="Oxidative Stress Induced Senescence"/>
</dbReference>
<dbReference type="Reactome" id="R-RNO-2871796">
    <property type="pathway name" value="FCERI mediated MAPK activation"/>
</dbReference>
<dbReference type="Reactome" id="R-RNO-450321">
    <property type="pathway name" value="JNK (c-Jun kinases) phosphorylation and activation mediated by activated human TAK1"/>
</dbReference>
<dbReference type="Reactome" id="R-RNO-450341">
    <property type="pathway name" value="Activation of the AP-1 family of transcription factors"/>
</dbReference>
<dbReference type="Reactome" id="R-RNO-5693565">
    <property type="pathway name" value="Recruitment and ATM-mediated phosphorylation of repair and signaling proteins at DNA double strand breaks"/>
</dbReference>
<dbReference type="Reactome" id="R-RNO-9007892">
    <property type="pathway name" value="Interleukin-38 signaling"/>
</dbReference>
<dbReference type="CD-CODE" id="1E07FF65">
    <property type="entry name" value="Neuronal RNP granule"/>
</dbReference>
<dbReference type="PRO" id="PR:P49185"/>
<dbReference type="Proteomes" id="UP000002494">
    <property type="component" value="Unplaced"/>
</dbReference>
<dbReference type="GO" id="GO:0030424">
    <property type="term" value="C:axon"/>
    <property type="evidence" value="ECO:0000314"/>
    <property type="project" value="RGD"/>
</dbReference>
<dbReference type="GO" id="GO:0097441">
    <property type="term" value="C:basal dendrite"/>
    <property type="evidence" value="ECO:0000266"/>
    <property type="project" value="RGD"/>
</dbReference>
<dbReference type="GO" id="GO:0005737">
    <property type="term" value="C:cytoplasm"/>
    <property type="evidence" value="ECO:0000266"/>
    <property type="project" value="RGD"/>
</dbReference>
<dbReference type="GO" id="GO:0005829">
    <property type="term" value="C:cytosol"/>
    <property type="evidence" value="ECO:0000266"/>
    <property type="project" value="RGD"/>
</dbReference>
<dbReference type="GO" id="GO:0032839">
    <property type="term" value="C:dendrite cytoplasm"/>
    <property type="evidence" value="ECO:0000314"/>
    <property type="project" value="RGD"/>
</dbReference>
<dbReference type="GO" id="GO:0005739">
    <property type="term" value="C:mitochondrion"/>
    <property type="evidence" value="ECO:0000266"/>
    <property type="project" value="RGD"/>
</dbReference>
<dbReference type="GO" id="GO:0043005">
    <property type="term" value="C:neuron projection"/>
    <property type="evidence" value="ECO:0000266"/>
    <property type="project" value="RGD"/>
</dbReference>
<dbReference type="GO" id="GO:0005654">
    <property type="term" value="C:nucleoplasm"/>
    <property type="evidence" value="ECO:0000304"/>
    <property type="project" value="Reactome"/>
</dbReference>
<dbReference type="GO" id="GO:0005634">
    <property type="term" value="C:nucleus"/>
    <property type="evidence" value="ECO:0000266"/>
    <property type="project" value="RGD"/>
</dbReference>
<dbReference type="GO" id="GO:0043204">
    <property type="term" value="C:perikaryon"/>
    <property type="evidence" value="ECO:0000314"/>
    <property type="project" value="RGD"/>
</dbReference>
<dbReference type="GO" id="GO:0002102">
    <property type="term" value="C:podosome"/>
    <property type="evidence" value="ECO:0000266"/>
    <property type="project" value="RGD"/>
</dbReference>
<dbReference type="GO" id="GO:0098685">
    <property type="term" value="C:Schaffer collateral - CA1 synapse"/>
    <property type="evidence" value="ECO:0000266"/>
    <property type="project" value="RGD"/>
</dbReference>
<dbReference type="GO" id="GO:0045202">
    <property type="term" value="C:synapse"/>
    <property type="evidence" value="ECO:0000314"/>
    <property type="project" value="UniProtKB"/>
</dbReference>
<dbReference type="GO" id="GO:0031982">
    <property type="term" value="C:vesicle"/>
    <property type="evidence" value="ECO:0000314"/>
    <property type="project" value="RGD"/>
</dbReference>
<dbReference type="GO" id="GO:0005524">
    <property type="term" value="F:ATP binding"/>
    <property type="evidence" value="ECO:0007669"/>
    <property type="project" value="UniProtKB-KW"/>
</dbReference>
<dbReference type="GO" id="GO:0019899">
    <property type="term" value="F:enzyme binding"/>
    <property type="evidence" value="ECO:0000266"/>
    <property type="project" value="RGD"/>
</dbReference>
<dbReference type="GO" id="GO:0042826">
    <property type="term" value="F:histone deacetylase binding"/>
    <property type="evidence" value="ECO:0000266"/>
    <property type="project" value="RGD"/>
</dbReference>
<dbReference type="GO" id="GO:0035033">
    <property type="term" value="F:histone deacetylase regulator activity"/>
    <property type="evidence" value="ECO:0000266"/>
    <property type="project" value="RGD"/>
</dbReference>
<dbReference type="GO" id="GO:0004705">
    <property type="term" value="F:JUN kinase activity"/>
    <property type="evidence" value="ECO:0000314"/>
    <property type="project" value="RGD"/>
</dbReference>
<dbReference type="GO" id="GO:0016301">
    <property type="term" value="F:kinase activity"/>
    <property type="evidence" value="ECO:0000266"/>
    <property type="project" value="RGD"/>
</dbReference>
<dbReference type="GO" id="GO:0019894">
    <property type="term" value="F:kinesin binding"/>
    <property type="evidence" value="ECO:0000353"/>
    <property type="project" value="RGD"/>
</dbReference>
<dbReference type="GO" id="GO:0004672">
    <property type="term" value="F:protein kinase activity"/>
    <property type="evidence" value="ECO:0000266"/>
    <property type="project" value="RGD"/>
</dbReference>
<dbReference type="GO" id="GO:0019903">
    <property type="term" value="F:protein phosphatase binding"/>
    <property type="evidence" value="ECO:0000266"/>
    <property type="project" value="RGD"/>
</dbReference>
<dbReference type="GO" id="GO:0106310">
    <property type="term" value="F:protein serine kinase activity"/>
    <property type="evidence" value="ECO:0007669"/>
    <property type="project" value="RHEA"/>
</dbReference>
<dbReference type="GO" id="GO:0004674">
    <property type="term" value="F:protein serine/threonine kinase activity"/>
    <property type="evidence" value="ECO:0000266"/>
    <property type="project" value="RGD"/>
</dbReference>
<dbReference type="GO" id="GO:0120283">
    <property type="term" value="F:protein serine/threonine kinase binding"/>
    <property type="evidence" value="ECO:0000266"/>
    <property type="project" value="RGD"/>
</dbReference>
<dbReference type="GO" id="GO:0004712">
    <property type="term" value="F:protein serine/threonine/tyrosine kinase activity"/>
    <property type="evidence" value="ECO:0000266"/>
    <property type="project" value="RGD"/>
</dbReference>
<dbReference type="GO" id="GO:0097190">
    <property type="term" value="P:apoptotic signaling pathway"/>
    <property type="evidence" value="ECO:0000266"/>
    <property type="project" value="RGD"/>
</dbReference>
<dbReference type="GO" id="GO:0034198">
    <property type="term" value="P:cellular response to amino acid starvation"/>
    <property type="evidence" value="ECO:0000266"/>
    <property type="project" value="RGD"/>
</dbReference>
<dbReference type="GO" id="GO:1904646">
    <property type="term" value="P:cellular response to amyloid-beta"/>
    <property type="evidence" value="ECO:0000270"/>
    <property type="project" value="RGD"/>
</dbReference>
<dbReference type="GO" id="GO:0070301">
    <property type="term" value="P:cellular response to hydrogen peroxide"/>
    <property type="evidence" value="ECO:0000266"/>
    <property type="project" value="RGD"/>
</dbReference>
<dbReference type="GO" id="GO:0071347">
    <property type="term" value="P:cellular response to interleukin-1"/>
    <property type="evidence" value="ECO:0000270"/>
    <property type="project" value="RGD"/>
</dbReference>
<dbReference type="GO" id="GO:0071222">
    <property type="term" value="P:cellular response to lipopolysaccharide"/>
    <property type="evidence" value="ECO:0000266"/>
    <property type="project" value="RGD"/>
</dbReference>
<dbReference type="GO" id="GO:0071260">
    <property type="term" value="P:cellular response to mechanical stimulus"/>
    <property type="evidence" value="ECO:0000266"/>
    <property type="project" value="RGD"/>
</dbReference>
<dbReference type="GO" id="GO:0071732">
    <property type="term" value="P:cellular response to nitric oxide"/>
    <property type="evidence" value="ECO:0000266"/>
    <property type="project" value="RGD"/>
</dbReference>
<dbReference type="GO" id="GO:0034599">
    <property type="term" value="P:cellular response to oxidative stress"/>
    <property type="evidence" value="ECO:0000266"/>
    <property type="project" value="RGD"/>
</dbReference>
<dbReference type="GO" id="GO:0090650">
    <property type="term" value="P:cellular response to oxygen-glucose deprivation"/>
    <property type="evidence" value="ECO:0000315"/>
    <property type="project" value="RGD"/>
</dbReference>
<dbReference type="GO" id="GO:0034614">
    <property type="term" value="P:cellular response to reactive oxygen species"/>
    <property type="evidence" value="ECO:0000266"/>
    <property type="project" value="RGD"/>
</dbReference>
<dbReference type="GO" id="GO:0048813">
    <property type="term" value="P:dendrite morphogenesis"/>
    <property type="evidence" value="ECO:0000266"/>
    <property type="project" value="RGD"/>
</dbReference>
<dbReference type="GO" id="GO:0097009">
    <property type="term" value="P:energy homeostasis"/>
    <property type="evidence" value="ECO:0000266"/>
    <property type="project" value="RGD"/>
</dbReference>
<dbReference type="GO" id="GO:0034349">
    <property type="term" value="P:glial cell apoptotic process"/>
    <property type="evidence" value="ECO:0000270"/>
    <property type="project" value="RGD"/>
</dbReference>
<dbReference type="GO" id="GO:0007229">
    <property type="term" value="P:integrin-mediated signaling pathway"/>
    <property type="evidence" value="ECO:0000266"/>
    <property type="project" value="RGD"/>
</dbReference>
<dbReference type="GO" id="GO:0007254">
    <property type="term" value="P:JNK cascade"/>
    <property type="evidence" value="ECO:0000250"/>
    <property type="project" value="UniProtKB"/>
</dbReference>
<dbReference type="GO" id="GO:0050804">
    <property type="term" value="P:modulation of chemical synaptic transmission"/>
    <property type="evidence" value="ECO:0000266"/>
    <property type="project" value="RGD"/>
</dbReference>
<dbReference type="GO" id="GO:0043066">
    <property type="term" value="P:negative regulation of apoptotic process"/>
    <property type="evidence" value="ECO:0000314"/>
    <property type="project" value="RGD"/>
</dbReference>
<dbReference type="GO" id="GO:0048666">
    <property type="term" value="P:neuron development"/>
    <property type="evidence" value="ECO:0000270"/>
    <property type="project" value="RGD"/>
</dbReference>
<dbReference type="GO" id="GO:0001764">
    <property type="term" value="P:neuron migration"/>
    <property type="evidence" value="ECO:0000266"/>
    <property type="project" value="RGD"/>
</dbReference>
<dbReference type="GO" id="GO:0031175">
    <property type="term" value="P:neuron projection development"/>
    <property type="evidence" value="ECO:0000315"/>
    <property type="project" value="RGD"/>
</dbReference>
<dbReference type="GO" id="GO:0097150">
    <property type="term" value="P:neuronal stem cell population maintenance"/>
    <property type="evidence" value="ECO:0000315"/>
    <property type="project" value="MGI"/>
</dbReference>
<dbReference type="GO" id="GO:0001503">
    <property type="term" value="P:ossification"/>
    <property type="evidence" value="ECO:0000266"/>
    <property type="project" value="RGD"/>
</dbReference>
<dbReference type="GO" id="GO:0018105">
    <property type="term" value="P:peptidyl-serine phosphorylation"/>
    <property type="evidence" value="ECO:0000250"/>
    <property type="project" value="UniProtKB"/>
</dbReference>
<dbReference type="GO" id="GO:0043065">
    <property type="term" value="P:positive regulation of apoptotic process"/>
    <property type="evidence" value="ECO:0000270"/>
    <property type="project" value="RGD"/>
</dbReference>
<dbReference type="GO" id="GO:2001235">
    <property type="term" value="P:positive regulation of apoptotic signaling pathway"/>
    <property type="evidence" value="ECO:0000266"/>
    <property type="project" value="RGD"/>
</dbReference>
<dbReference type="GO" id="GO:0010666">
    <property type="term" value="P:positive regulation of cardiac muscle cell apoptotic process"/>
    <property type="evidence" value="ECO:0000315"/>
    <property type="project" value="RGD"/>
</dbReference>
<dbReference type="GO" id="GO:0030335">
    <property type="term" value="P:positive regulation of cell migration"/>
    <property type="evidence" value="ECO:0000314"/>
    <property type="project" value="RGD"/>
</dbReference>
<dbReference type="GO" id="GO:2000017">
    <property type="term" value="P:positive regulation of determination of dorsal identity"/>
    <property type="evidence" value="ECO:0000266"/>
    <property type="project" value="RGD"/>
</dbReference>
<dbReference type="GO" id="GO:0045740">
    <property type="term" value="P:positive regulation of DNA replication"/>
    <property type="evidence" value="ECO:0000315"/>
    <property type="project" value="RGD"/>
</dbReference>
<dbReference type="GO" id="GO:0010628">
    <property type="term" value="P:positive regulation of gene expression"/>
    <property type="evidence" value="ECO:0000266"/>
    <property type="project" value="RGD"/>
</dbReference>
<dbReference type="GO" id="GO:0034352">
    <property type="term" value="P:positive regulation of glial cell apoptotic process"/>
    <property type="evidence" value="ECO:0000315"/>
    <property type="project" value="RGD"/>
</dbReference>
<dbReference type="GO" id="GO:0031116">
    <property type="term" value="P:positive regulation of microtubule polymerization"/>
    <property type="evidence" value="ECO:0000315"/>
    <property type="project" value="RGD"/>
</dbReference>
<dbReference type="GO" id="GO:0002052">
    <property type="term" value="P:positive regulation of neuroblast proliferation"/>
    <property type="evidence" value="ECO:0000315"/>
    <property type="project" value="RGD"/>
</dbReference>
<dbReference type="GO" id="GO:0043525">
    <property type="term" value="P:positive regulation of neuron apoptotic process"/>
    <property type="evidence" value="ECO:0000315"/>
    <property type="project" value="RGD"/>
</dbReference>
<dbReference type="GO" id="GO:2001224">
    <property type="term" value="P:positive regulation of neuron migration"/>
    <property type="evidence" value="ECO:0000315"/>
    <property type="project" value="RGD"/>
</dbReference>
<dbReference type="GO" id="GO:1900227">
    <property type="term" value="P:positive regulation of NLRP3 inflammasome complex assembly"/>
    <property type="evidence" value="ECO:0000250"/>
    <property type="project" value="UniProtKB"/>
</dbReference>
<dbReference type="GO" id="GO:0071803">
    <property type="term" value="P:positive regulation of podosome assembly"/>
    <property type="evidence" value="ECO:0000266"/>
    <property type="project" value="RGD"/>
</dbReference>
<dbReference type="GO" id="GO:0032436">
    <property type="term" value="P:positive regulation of proteasomal ubiquitin-dependent protein catabolic process"/>
    <property type="evidence" value="ECO:0000266"/>
    <property type="project" value="RGD"/>
</dbReference>
<dbReference type="GO" id="GO:0051247">
    <property type="term" value="P:positive regulation of protein metabolic process"/>
    <property type="evidence" value="ECO:0000266"/>
    <property type="project" value="RGD"/>
</dbReference>
<dbReference type="GO" id="GO:0031398">
    <property type="term" value="P:positive regulation of protein ubiquitination"/>
    <property type="evidence" value="ECO:0000266"/>
    <property type="project" value="RGD"/>
</dbReference>
<dbReference type="GO" id="GO:0097300">
    <property type="term" value="P:programmed necrotic cell death"/>
    <property type="evidence" value="ECO:0000266"/>
    <property type="project" value="RGD"/>
</dbReference>
<dbReference type="GO" id="GO:0061833">
    <property type="term" value="P:protein localization to tricellular tight junction"/>
    <property type="evidence" value="ECO:0000266"/>
    <property type="project" value="RGD"/>
</dbReference>
<dbReference type="GO" id="GO:0046605">
    <property type="term" value="P:regulation of centrosome cycle"/>
    <property type="evidence" value="ECO:0000315"/>
    <property type="project" value="RGD"/>
</dbReference>
<dbReference type="GO" id="GO:0042752">
    <property type="term" value="P:regulation of circadian rhythm"/>
    <property type="evidence" value="ECO:0000250"/>
    <property type="project" value="UniProtKB"/>
</dbReference>
<dbReference type="GO" id="GO:1904809">
    <property type="term" value="P:regulation of dense core granule transport"/>
    <property type="evidence" value="ECO:0000314"/>
    <property type="project" value="UniProtKB"/>
</dbReference>
<dbReference type="GO" id="GO:0006355">
    <property type="term" value="P:regulation of DNA-templated transcription"/>
    <property type="evidence" value="ECO:0000314"/>
    <property type="project" value="RGD"/>
</dbReference>
<dbReference type="GO" id="GO:0010468">
    <property type="term" value="P:regulation of gene expression"/>
    <property type="evidence" value="ECO:0000266"/>
    <property type="project" value="RGD"/>
</dbReference>
<dbReference type="GO" id="GO:0045664">
    <property type="term" value="P:regulation of neuron differentiation"/>
    <property type="evidence" value="ECO:0000315"/>
    <property type="project" value="RGD"/>
</dbReference>
<dbReference type="GO" id="GO:0032880">
    <property type="term" value="P:regulation of protein localization"/>
    <property type="evidence" value="ECO:0000266"/>
    <property type="project" value="RGD"/>
</dbReference>
<dbReference type="GO" id="GO:0046686">
    <property type="term" value="P:response to cadmium ion"/>
    <property type="evidence" value="ECO:0000266"/>
    <property type="project" value="RGD"/>
</dbReference>
<dbReference type="GO" id="GO:0042542">
    <property type="term" value="P:response to hydrogen peroxide"/>
    <property type="evidence" value="ECO:0000314"/>
    <property type="project" value="RGD"/>
</dbReference>
<dbReference type="GO" id="GO:0009612">
    <property type="term" value="P:response to mechanical stimulus"/>
    <property type="evidence" value="ECO:0000318"/>
    <property type="project" value="GO_Central"/>
</dbReference>
<dbReference type="GO" id="GO:0006979">
    <property type="term" value="P:response to oxidative stress"/>
    <property type="evidence" value="ECO:0000266"/>
    <property type="project" value="RGD"/>
</dbReference>
<dbReference type="GO" id="GO:0048545">
    <property type="term" value="P:response to steroid hormone"/>
    <property type="evidence" value="ECO:0000270"/>
    <property type="project" value="RGD"/>
</dbReference>
<dbReference type="GO" id="GO:0009411">
    <property type="term" value="P:response to UV"/>
    <property type="evidence" value="ECO:0000266"/>
    <property type="project" value="RGD"/>
</dbReference>
<dbReference type="GO" id="GO:0048511">
    <property type="term" value="P:rhythmic process"/>
    <property type="evidence" value="ECO:0007669"/>
    <property type="project" value="UniProtKB-KW"/>
</dbReference>
<dbReference type="GO" id="GO:0060395">
    <property type="term" value="P:SMAD protein signal transduction"/>
    <property type="evidence" value="ECO:0000315"/>
    <property type="project" value="RGD"/>
</dbReference>
<dbReference type="GO" id="GO:0051403">
    <property type="term" value="P:stress-activated MAPK cascade"/>
    <property type="evidence" value="ECO:0000266"/>
    <property type="project" value="RGD"/>
</dbReference>
<dbReference type="GO" id="GO:0097050">
    <property type="term" value="P:type B pancreatic cell apoptotic process"/>
    <property type="evidence" value="ECO:0000315"/>
    <property type="project" value="CACAO"/>
</dbReference>
<dbReference type="CDD" id="cd07850">
    <property type="entry name" value="STKc_JNK"/>
    <property type="match status" value="1"/>
</dbReference>
<dbReference type="FunFam" id="1.10.510.10:FF:000009">
    <property type="entry name" value="Mitogen-activated protein kinase"/>
    <property type="match status" value="1"/>
</dbReference>
<dbReference type="FunFam" id="3.30.200.20:FF:000210">
    <property type="entry name" value="Mitogen-activated protein kinase"/>
    <property type="match status" value="1"/>
</dbReference>
<dbReference type="Gene3D" id="3.30.200.20">
    <property type="entry name" value="Phosphorylase Kinase, domain 1"/>
    <property type="match status" value="1"/>
</dbReference>
<dbReference type="Gene3D" id="1.10.510.10">
    <property type="entry name" value="Transferase(Phosphotransferase) domain 1"/>
    <property type="match status" value="1"/>
</dbReference>
<dbReference type="InterPro" id="IPR011009">
    <property type="entry name" value="Kinase-like_dom_sf"/>
</dbReference>
<dbReference type="InterPro" id="IPR050117">
    <property type="entry name" value="MAP_kinase"/>
</dbReference>
<dbReference type="InterPro" id="IPR003527">
    <property type="entry name" value="MAP_kinase_CS"/>
</dbReference>
<dbReference type="InterPro" id="IPR008351">
    <property type="entry name" value="MAPK_JNK"/>
</dbReference>
<dbReference type="InterPro" id="IPR000719">
    <property type="entry name" value="Prot_kinase_dom"/>
</dbReference>
<dbReference type="InterPro" id="IPR008271">
    <property type="entry name" value="Ser/Thr_kinase_AS"/>
</dbReference>
<dbReference type="PANTHER" id="PTHR24055">
    <property type="entry name" value="MITOGEN-ACTIVATED PROTEIN KINASE"/>
    <property type="match status" value="1"/>
</dbReference>
<dbReference type="Pfam" id="PF00069">
    <property type="entry name" value="Pkinase"/>
    <property type="match status" value="1"/>
</dbReference>
<dbReference type="PRINTS" id="PR01772">
    <property type="entry name" value="JNKMAPKINASE"/>
</dbReference>
<dbReference type="SMART" id="SM00220">
    <property type="entry name" value="S_TKc"/>
    <property type="match status" value="1"/>
</dbReference>
<dbReference type="SUPFAM" id="SSF56112">
    <property type="entry name" value="Protein kinase-like (PK-like)"/>
    <property type="match status" value="1"/>
</dbReference>
<dbReference type="PROSITE" id="PS01351">
    <property type="entry name" value="MAPK"/>
    <property type="match status" value="1"/>
</dbReference>
<dbReference type="PROSITE" id="PS50011">
    <property type="entry name" value="PROTEIN_KINASE_DOM"/>
    <property type="match status" value="1"/>
</dbReference>
<dbReference type="PROSITE" id="PS00108">
    <property type="entry name" value="PROTEIN_KINASE_ST"/>
    <property type="match status" value="1"/>
</dbReference>
<sequence>MSRSKRDNNFYSVEIADSTFTVLKRYQNLKPIGSGAQGIVCAAYDAILERNVAIKKLSRPFQNQTHAKRAYRELVLMKCVNHKNIIGLLNVFTPQKSLEEFQDVYIVMELMDANLCQVIQMELDHERMSYLLYQMLCGIKHLHSAGIIHRDLKPSNIVVKSDCTLKILDFGLARTAGTSFMMTPYVVTRYYRAPEVILGMGYKENVDLWSVGCIMGEMVCLKILFPGRDYIDQWNKVIEQLGTPCPEFMKKLQPTVRTYVENRPKYAGYSFEKLFPDVLFPADSEHNKLKASQARDLLSKMLVIDASKRISVDEALQHPYINVWYDPSEAEAPPPKIPDKQLDEREHTIEEWKELIYKEVMDLEERTKNGVIRGQPSPLGAAVINGSQHPVSSPSVNDMSSMSTDPTLASD</sequence>
<feature type="chain" id="PRO_0000186264" description="Mitogen-activated protein kinase 8">
    <location>
        <begin position="1"/>
        <end position="411"/>
    </location>
</feature>
<feature type="domain" description="Protein kinase" evidence="4">
    <location>
        <begin position="26"/>
        <end position="321"/>
    </location>
</feature>
<feature type="region of interest" description="Disordered" evidence="6">
    <location>
        <begin position="368"/>
        <end position="411"/>
    </location>
</feature>
<feature type="short sequence motif" description="TXY">
    <location>
        <begin position="183"/>
        <end position="185"/>
    </location>
</feature>
<feature type="compositionally biased region" description="Low complexity" evidence="6">
    <location>
        <begin position="390"/>
        <end position="403"/>
    </location>
</feature>
<feature type="active site" description="Proton acceptor" evidence="4 5">
    <location>
        <position position="151"/>
    </location>
</feature>
<feature type="binding site" evidence="4">
    <location>
        <begin position="32"/>
        <end position="40"/>
    </location>
    <ligand>
        <name>ATP</name>
        <dbReference type="ChEBI" id="CHEBI:30616"/>
    </ligand>
</feature>
<feature type="binding site" evidence="4">
    <location>
        <position position="55"/>
    </location>
    <ligand>
        <name>ATP</name>
        <dbReference type="ChEBI" id="CHEBI:30616"/>
    </ligand>
</feature>
<feature type="modified residue" description="S-nitrosocysteine; in inhibited form" evidence="7">
    <location>
        <position position="116"/>
    </location>
</feature>
<feature type="modified residue" description="Phosphothreonine; by MAP2K7" evidence="2">
    <location>
        <position position="183"/>
    </location>
</feature>
<feature type="modified residue" description="Phosphotyrosine; by MAP2K4" evidence="2">
    <location>
        <position position="185"/>
    </location>
</feature>
<feature type="modified residue" description="Phosphoserine" evidence="3">
    <location>
        <position position="377"/>
    </location>
</feature>
<feature type="mutagenesis site" description="Abolished inhibitory effect of IFN-gamma on JNK1 activity." evidence="7">
    <original>C</original>
    <variation>S</variation>
    <location>
        <position position="116"/>
    </location>
</feature>
<gene>
    <name type="primary">Mapk8</name>
    <name type="synonym">Jnk1</name>
    <name type="synonym">Prkm8</name>
</gene>
<keyword id="KW-0067">ATP-binding</keyword>
<keyword id="KW-0090">Biological rhythms</keyword>
<keyword id="KW-0963">Cytoplasm</keyword>
<keyword id="KW-0418">Kinase</keyword>
<keyword id="KW-0547">Nucleotide-binding</keyword>
<keyword id="KW-0539">Nucleus</keyword>
<keyword id="KW-0597">Phosphoprotein</keyword>
<keyword id="KW-1185">Reference proteome</keyword>
<keyword id="KW-0702">S-nitrosylation</keyword>
<keyword id="KW-0723">Serine/threonine-protein kinase</keyword>
<keyword id="KW-0770">Synapse</keyword>
<keyword id="KW-0808">Transferase</keyword>
<reference key="1">
    <citation type="journal article" date="1994" name="Nature">
        <title>The stress-activated protein kinase subfamily of c-Jun kinases.</title>
        <authorList>
            <person name="Kyriakis J.M."/>
            <person name="Banerjee P."/>
            <person name="Nikolakaki E."/>
            <person name="Dai T."/>
            <person name="Rubie E.A."/>
            <person name="Ahmad M.F."/>
            <person name="Avruch J."/>
            <person name="Woodgett J.R."/>
        </authorList>
    </citation>
    <scope>NUCLEOTIDE SEQUENCE [MRNA]</scope>
    <source>
        <tissue>Brain</tissue>
    </source>
</reference>
<reference key="2">
    <citation type="journal article" date="1998" name="J. Biol. Chem.">
        <title>Stimulation of 'stress-regulated' mitogen-activated protein kinases (stress-activated protein kinases/c-Jun N-terminal kinases and p38-mitogen-activated protein kinases) in perfused rat hearts by oxidative and other stresses.</title>
        <authorList>
            <person name="Clerk A."/>
            <person name="Fuller S.J."/>
            <person name="Michael A."/>
            <person name="Sugden P.H."/>
        </authorList>
    </citation>
    <scope>FUNCTION</scope>
    <scope>CATALYTIC ACTIVITY</scope>
    <scope>COFACTOR</scope>
    <source>
        <tissue>Heart</tissue>
    </source>
</reference>
<reference key="3">
    <citation type="journal article" date="2000" name="Proc. Natl. Acad. Sci. U.S.A.">
        <title>Nitric oxide negatively regulates c-Jun N-terminal kinase/stress-activated protein kinase by means of S-nitrosylation.</title>
        <authorList>
            <person name="Park H.S."/>
            <person name="Huh S.H."/>
            <person name="Kim M.S."/>
            <person name="Lee S.H."/>
            <person name="Choi E.J."/>
        </authorList>
    </citation>
    <scope>CATALYTIC ACTIVITY</scope>
    <scope>S-NITROSYLATION AT CYS-116</scope>
    <scope>MUTAGENESIS OF CYS-116</scope>
</reference>
<reference key="4">
    <citation type="journal article" date="2003" name="Brain Res. Mol. Brain Res.">
        <title>Cytoplasmic retention sites in p190RhoGEF confer anti-apoptotic activity to an EGFP-tagged protein.</title>
        <authorList>
            <person name="Wu J."/>
            <person name="Zhai J."/>
            <person name="Lin H."/>
            <person name="Nie Z."/>
            <person name="Ge W.-W."/>
            <person name="Garcia-Bermejo L."/>
            <person name="Muschel R.J."/>
            <person name="Schlaepfer W.W."/>
            <person name="Canete-Soler R."/>
        </authorList>
    </citation>
    <scope>IDENTIFICATION IN A COMPLEX WITH MAPK8IP1 AND ARHGEF28</scope>
</reference>
<reference key="5">
    <citation type="journal article" date="2006" name="J. Cell Biol.">
        <title>JNK1 phosphorylation of SCG10 determines microtubule dynamics and axodendritic length.</title>
        <authorList>
            <person name="Tararuk T."/>
            <person name="Ostman N."/>
            <person name="Li W."/>
            <person name="Bjorkblom B."/>
            <person name="Padzik A."/>
            <person name="Zdrojewska J."/>
            <person name="Hongisto V."/>
            <person name="Herdegen T."/>
            <person name="Konopka W."/>
            <person name="Courtney M.J."/>
            <person name="Coffey E.T."/>
        </authorList>
    </citation>
    <scope>FUNCTION</scope>
    <scope>CATALYTIC ACTIVITY</scope>
    <scope>INTERACTION WITH MAPK8IP1; STMN2; STMN3 AND STMN4</scope>
    <scope>SUBCELLULAR LOCATION</scope>
</reference>
<reference key="6">
    <citation type="journal article" date="2007" name="FEBS Lett.">
        <title>GRASP-1 is a neuronal scaffold protein for the JNK signaling pathway.</title>
        <authorList>
            <person name="Ye B."/>
            <person name="Yu W.P."/>
            <person name="Thomas G.M."/>
            <person name="Huganir R.L."/>
        </authorList>
    </citation>
    <scope>INTERACTION WITH GRIPAP1</scope>
</reference>
<reference key="7">
    <citation type="journal article" date="2011" name="Nat. Neurosci.">
        <title>Phosphorylation of SCG10/stathmin-2 determines multipolar stage exit and neuronal migration rate.</title>
        <authorList>
            <person name="Westerlund N."/>
            <person name="Zdrojewska J."/>
            <person name="Padzik A."/>
            <person name="Komulainen E."/>
            <person name="Bjorkblom B."/>
            <person name="Rannikko E."/>
            <person name="Tararuk T."/>
            <person name="Garcia-Frigola C."/>
            <person name="Sandholm J."/>
            <person name="Nguyen L."/>
            <person name="Kallunki T."/>
            <person name="Courtney M.J."/>
            <person name="Coffey E.T."/>
        </authorList>
    </citation>
    <scope>FUNCTION</scope>
    <scope>CATALYTIC ACTIVITY</scope>
</reference>
<reference key="8">
    <citation type="journal article" date="2017" name="Cell Rep.">
        <title>Capture of Dense Core Vesicles at Synapses by JNK-Dependent Phosphorylation of Synaptotagmin-4.</title>
        <authorList>
            <person name="Bharat V."/>
            <person name="Siebrecht M."/>
            <person name="Burk K."/>
            <person name="Ahmed S."/>
            <person name="Reissner C."/>
            <person name="Kohansal-Nodehi M."/>
            <person name="Steubler V."/>
            <person name="Zweckstetter M."/>
            <person name="Ting J.T."/>
            <person name="Dean C."/>
        </authorList>
    </citation>
    <scope>FUNCTION</scope>
    <scope>SUBCELLULAR LOCATION</scope>
</reference>
<organism>
    <name type="scientific">Rattus norvegicus</name>
    <name type="common">Rat</name>
    <dbReference type="NCBI Taxonomy" id="10116"/>
    <lineage>
        <taxon>Eukaryota</taxon>
        <taxon>Metazoa</taxon>
        <taxon>Chordata</taxon>
        <taxon>Craniata</taxon>
        <taxon>Vertebrata</taxon>
        <taxon>Euteleostomi</taxon>
        <taxon>Mammalia</taxon>
        <taxon>Eutheria</taxon>
        <taxon>Euarchontoglires</taxon>
        <taxon>Glires</taxon>
        <taxon>Rodentia</taxon>
        <taxon>Myomorpha</taxon>
        <taxon>Muroidea</taxon>
        <taxon>Muridae</taxon>
        <taxon>Murinae</taxon>
        <taxon>Rattus</taxon>
    </lineage>
</organism>